<evidence type="ECO:0000255" key="1">
    <source>
        <dbReference type="HAMAP-Rule" id="MF_00019"/>
    </source>
</evidence>
<proteinExistence type="inferred from homology"/>
<sequence>MPQKVRIALDAMGGDVGAAVVIPGAAIALSRHPDAEFLLFGDSAKIVPELDQHPRLKAVSRVIHTDVAVSMEDKPSQALRRGRKTSSMWLALEAVKKGEADVAVSAGNTGALVAMARFCLRMLEGIDRPALAAIWPTRRAKCVVLDLGATIGGDAHHLVALAAMGGALASVLFEKPRPTVGLLNIGVEEIKGHQEIREAGEMLRSMNLPQLDYIGFVEGDGIGKGEADVIVTEGFSGNIALKAAEGAVRQMMDLLRSAIKASWLAQIGYLLARGAFRVLREKIDPKNYNGSVVLGLNGIVVKSHGGSDAEGFARAVDVGYEMARFDLLTKINQTLNRDGGALAPAPVAQEAVS</sequence>
<dbReference type="EC" id="2.3.1.274" evidence="1"/>
<dbReference type="EMBL" id="CP000494">
    <property type="protein sequence ID" value="ABQ36660.1"/>
    <property type="molecule type" value="Genomic_DNA"/>
</dbReference>
<dbReference type="RefSeq" id="WP_012044650.1">
    <property type="nucleotide sequence ID" value="NC_009485.1"/>
</dbReference>
<dbReference type="SMR" id="A5EKG6"/>
<dbReference type="STRING" id="288000.BBta_4632"/>
<dbReference type="KEGG" id="bbt:BBta_4632"/>
<dbReference type="eggNOG" id="COG0416">
    <property type="taxonomic scope" value="Bacteria"/>
</dbReference>
<dbReference type="HOGENOM" id="CLU_039379_1_0_5"/>
<dbReference type="OrthoDB" id="9806408at2"/>
<dbReference type="UniPathway" id="UPA00085"/>
<dbReference type="Proteomes" id="UP000000246">
    <property type="component" value="Chromosome"/>
</dbReference>
<dbReference type="GO" id="GO:0005737">
    <property type="term" value="C:cytoplasm"/>
    <property type="evidence" value="ECO:0007669"/>
    <property type="project" value="UniProtKB-SubCell"/>
</dbReference>
<dbReference type="GO" id="GO:0043811">
    <property type="term" value="F:phosphate:acyl-[acyl carrier protein] acyltransferase activity"/>
    <property type="evidence" value="ECO:0007669"/>
    <property type="project" value="UniProtKB-UniRule"/>
</dbReference>
<dbReference type="GO" id="GO:0006633">
    <property type="term" value="P:fatty acid biosynthetic process"/>
    <property type="evidence" value="ECO:0007669"/>
    <property type="project" value="UniProtKB-UniRule"/>
</dbReference>
<dbReference type="GO" id="GO:0008654">
    <property type="term" value="P:phospholipid biosynthetic process"/>
    <property type="evidence" value="ECO:0007669"/>
    <property type="project" value="UniProtKB-KW"/>
</dbReference>
<dbReference type="Gene3D" id="3.40.718.10">
    <property type="entry name" value="Isopropylmalate Dehydrogenase"/>
    <property type="match status" value="1"/>
</dbReference>
<dbReference type="HAMAP" id="MF_00019">
    <property type="entry name" value="PlsX"/>
    <property type="match status" value="1"/>
</dbReference>
<dbReference type="InterPro" id="IPR003664">
    <property type="entry name" value="FA_synthesis"/>
</dbReference>
<dbReference type="InterPro" id="IPR012281">
    <property type="entry name" value="Phospholipid_synth_PlsX-like"/>
</dbReference>
<dbReference type="NCBIfam" id="TIGR00182">
    <property type="entry name" value="plsX"/>
    <property type="match status" value="1"/>
</dbReference>
<dbReference type="PANTHER" id="PTHR30100">
    <property type="entry name" value="FATTY ACID/PHOSPHOLIPID SYNTHESIS PROTEIN PLSX"/>
    <property type="match status" value="1"/>
</dbReference>
<dbReference type="PANTHER" id="PTHR30100:SF1">
    <property type="entry name" value="PHOSPHATE ACYLTRANSFERASE"/>
    <property type="match status" value="1"/>
</dbReference>
<dbReference type="Pfam" id="PF02504">
    <property type="entry name" value="FA_synthesis"/>
    <property type="match status" value="1"/>
</dbReference>
<dbReference type="PIRSF" id="PIRSF002465">
    <property type="entry name" value="Phsphlp_syn_PlsX"/>
    <property type="match status" value="1"/>
</dbReference>
<dbReference type="SUPFAM" id="SSF53659">
    <property type="entry name" value="Isocitrate/Isopropylmalate dehydrogenase-like"/>
    <property type="match status" value="1"/>
</dbReference>
<comment type="function">
    <text evidence="1">Catalyzes the reversible formation of acyl-phosphate (acyl-PO(4)) from acyl-[acyl-carrier-protein] (acyl-ACP). This enzyme utilizes acyl-ACP as fatty acyl donor, but not acyl-CoA.</text>
</comment>
<comment type="catalytic activity">
    <reaction evidence="1">
        <text>a fatty acyl-[ACP] + phosphate = an acyl phosphate + holo-[ACP]</text>
        <dbReference type="Rhea" id="RHEA:42292"/>
        <dbReference type="Rhea" id="RHEA-COMP:9685"/>
        <dbReference type="Rhea" id="RHEA-COMP:14125"/>
        <dbReference type="ChEBI" id="CHEBI:43474"/>
        <dbReference type="ChEBI" id="CHEBI:59918"/>
        <dbReference type="ChEBI" id="CHEBI:64479"/>
        <dbReference type="ChEBI" id="CHEBI:138651"/>
        <dbReference type="EC" id="2.3.1.274"/>
    </reaction>
</comment>
<comment type="pathway">
    <text evidence="1">Lipid metabolism; phospholipid metabolism.</text>
</comment>
<comment type="subunit">
    <text evidence="1">Homodimer. Probably interacts with PlsY.</text>
</comment>
<comment type="subcellular location">
    <subcellularLocation>
        <location evidence="1">Cytoplasm</location>
    </subcellularLocation>
    <text evidence="1">Associated with the membrane possibly through PlsY.</text>
</comment>
<comment type="similarity">
    <text evidence="1">Belongs to the PlsX family.</text>
</comment>
<feature type="chain" id="PRO_1000001721" description="Phosphate acyltransferase">
    <location>
        <begin position="1"/>
        <end position="353"/>
    </location>
</feature>
<gene>
    <name evidence="1" type="primary">plsX</name>
    <name type="ordered locus">BBta_4632</name>
</gene>
<keyword id="KW-0963">Cytoplasm</keyword>
<keyword id="KW-0444">Lipid biosynthesis</keyword>
<keyword id="KW-0443">Lipid metabolism</keyword>
<keyword id="KW-0594">Phospholipid biosynthesis</keyword>
<keyword id="KW-1208">Phospholipid metabolism</keyword>
<keyword id="KW-1185">Reference proteome</keyword>
<keyword id="KW-0808">Transferase</keyword>
<organism>
    <name type="scientific">Bradyrhizobium sp. (strain BTAi1 / ATCC BAA-1182)</name>
    <dbReference type="NCBI Taxonomy" id="288000"/>
    <lineage>
        <taxon>Bacteria</taxon>
        <taxon>Pseudomonadati</taxon>
        <taxon>Pseudomonadota</taxon>
        <taxon>Alphaproteobacteria</taxon>
        <taxon>Hyphomicrobiales</taxon>
        <taxon>Nitrobacteraceae</taxon>
        <taxon>Bradyrhizobium</taxon>
    </lineage>
</organism>
<accession>A5EKG6</accession>
<name>PLSX_BRASB</name>
<protein>
    <recommendedName>
        <fullName evidence="1">Phosphate acyltransferase</fullName>
        <ecNumber evidence="1">2.3.1.274</ecNumber>
    </recommendedName>
    <alternativeName>
        <fullName evidence="1">Acyl-ACP phosphotransacylase</fullName>
    </alternativeName>
    <alternativeName>
        <fullName evidence="1">Acyl-[acyl-carrier-protein]--phosphate acyltransferase</fullName>
    </alternativeName>
    <alternativeName>
        <fullName evidence="1">Phosphate-acyl-ACP acyltransferase</fullName>
    </alternativeName>
</protein>
<reference key="1">
    <citation type="journal article" date="2007" name="Science">
        <title>Legumes symbioses: absence of nod genes in photosynthetic bradyrhizobia.</title>
        <authorList>
            <person name="Giraud E."/>
            <person name="Moulin L."/>
            <person name="Vallenet D."/>
            <person name="Barbe V."/>
            <person name="Cytryn E."/>
            <person name="Avarre J.-C."/>
            <person name="Jaubert M."/>
            <person name="Simon D."/>
            <person name="Cartieaux F."/>
            <person name="Prin Y."/>
            <person name="Bena G."/>
            <person name="Hannibal L."/>
            <person name="Fardoux J."/>
            <person name="Kojadinovic M."/>
            <person name="Vuillet L."/>
            <person name="Lajus A."/>
            <person name="Cruveiller S."/>
            <person name="Rouy Z."/>
            <person name="Mangenot S."/>
            <person name="Segurens B."/>
            <person name="Dossat C."/>
            <person name="Franck W.L."/>
            <person name="Chang W.-S."/>
            <person name="Saunders E."/>
            <person name="Bruce D."/>
            <person name="Richardson P."/>
            <person name="Normand P."/>
            <person name="Dreyfus B."/>
            <person name="Pignol D."/>
            <person name="Stacey G."/>
            <person name="Emerich D."/>
            <person name="Vermeglio A."/>
            <person name="Medigue C."/>
            <person name="Sadowsky M."/>
        </authorList>
    </citation>
    <scope>NUCLEOTIDE SEQUENCE [LARGE SCALE GENOMIC DNA]</scope>
    <source>
        <strain>BTAi1 / ATCC BAA-1182</strain>
    </source>
</reference>